<dbReference type="EC" id="7.1.1.-" evidence="1"/>
<dbReference type="EMBL" id="CP000901">
    <property type="protein sequence ID" value="ABX86502.1"/>
    <property type="molecule type" value="Genomic_DNA"/>
</dbReference>
<dbReference type="RefSeq" id="WP_002210278.1">
    <property type="nucleotide sequence ID" value="NZ_CP009935.1"/>
</dbReference>
<dbReference type="SMR" id="A9R6L9"/>
<dbReference type="KEGG" id="ypg:YpAngola_A1815"/>
<dbReference type="PATRIC" id="fig|349746.12.peg.2791"/>
<dbReference type="GO" id="GO:0005886">
    <property type="term" value="C:plasma membrane"/>
    <property type="evidence" value="ECO:0007669"/>
    <property type="project" value="UniProtKB-SubCell"/>
</dbReference>
<dbReference type="GO" id="GO:0045271">
    <property type="term" value="C:respiratory chain complex I"/>
    <property type="evidence" value="ECO:0007669"/>
    <property type="project" value="TreeGrafter"/>
</dbReference>
<dbReference type="GO" id="GO:0051539">
    <property type="term" value="F:4 iron, 4 sulfur cluster binding"/>
    <property type="evidence" value="ECO:0007669"/>
    <property type="project" value="UniProtKB-KW"/>
</dbReference>
<dbReference type="GO" id="GO:0005506">
    <property type="term" value="F:iron ion binding"/>
    <property type="evidence" value="ECO:0007669"/>
    <property type="project" value="UniProtKB-UniRule"/>
</dbReference>
<dbReference type="GO" id="GO:0008137">
    <property type="term" value="F:NADH dehydrogenase (ubiquinone) activity"/>
    <property type="evidence" value="ECO:0007669"/>
    <property type="project" value="InterPro"/>
</dbReference>
<dbReference type="GO" id="GO:0050136">
    <property type="term" value="F:NADH:ubiquinone reductase (non-electrogenic) activity"/>
    <property type="evidence" value="ECO:0007669"/>
    <property type="project" value="UniProtKB-UniRule"/>
</dbReference>
<dbReference type="GO" id="GO:0048038">
    <property type="term" value="F:quinone binding"/>
    <property type="evidence" value="ECO:0007669"/>
    <property type="project" value="UniProtKB-KW"/>
</dbReference>
<dbReference type="GO" id="GO:0009060">
    <property type="term" value="P:aerobic respiration"/>
    <property type="evidence" value="ECO:0007669"/>
    <property type="project" value="TreeGrafter"/>
</dbReference>
<dbReference type="GO" id="GO:0015990">
    <property type="term" value="P:electron transport coupled proton transport"/>
    <property type="evidence" value="ECO:0007669"/>
    <property type="project" value="TreeGrafter"/>
</dbReference>
<dbReference type="FunFam" id="3.40.50.12280:FF:000002">
    <property type="entry name" value="NADH-quinone oxidoreductase subunit B"/>
    <property type="match status" value="1"/>
</dbReference>
<dbReference type="Gene3D" id="3.40.50.12280">
    <property type="match status" value="1"/>
</dbReference>
<dbReference type="HAMAP" id="MF_01356">
    <property type="entry name" value="NDH1_NuoB"/>
    <property type="match status" value="1"/>
</dbReference>
<dbReference type="InterPro" id="IPR006137">
    <property type="entry name" value="NADH_UbQ_OxRdtase-like_20kDa"/>
</dbReference>
<dbReference type="InterPro" id="IPR006138">
    <property type="entry name" value="NADH_UQ_OxRdtase_20Kd_su"/>
</dbReference>
<dbReference type="NCBIfam" id="TIGR01957">
    <property type="entry name" value="nuoB_fam"/>
    <property type="match status" value="1"/>
</dbReference>
<dbReference type="NCBIfam" id="NF005012">
    <property type="entry name" value="PRK06411.1"/>
    <property type="match status" value="1"/>
</dbReference>
<dbReference type="PANTHER" id="PTHR11995">
    <property type="entry name" value="NADH DEHYDROGENASE"/>
    <property type="match status" value="1"/>
</dbReference>
<dbReference type="PANTHER" id="PTHR11995:SF14">
    <property type="entry name" value="NADH DEHYDROGENASE [UBIQUINONE] IRON-SULFUR PROTEIN 7, MITOCHONDRIAL"/>
    <property type="match status" value="1"/>
</dbReference>
<dbReference type="Pfam" id="PF01058">
    <property type="entry name" value="Oxidored_q6"/>
    <property type="match status" value="1"/>
</dbReference>
<dbReference type="SUPFAM" id="SSF56770">
    <property type="entry name" value="HydA/Nqo6-like"/>
    <property type="match status" value="1"/>
</dbReference>
<dbReference type="PROSITE" id="PS01150">
    <property type="entry name" value="COMPLEX1_20K"/>
    <property type="match status" value="1"/>
</dbReference>
<accession>A9R6L9</accession>
<comment type="function">
    <text evidence="1">NDH-1 shuttles electrons from NADH, via FMN and iron-sulfur (Fe-S) centers, to quinones in the respiratory chain. The immediate electron acceptor for the enzyme in this species is believed to be ubiquinone. Couples the redox reaction to proton translocation (for every two electrons transferred, four hydrogen ions are translocated across the cytoplasmic membrane), and thus conserves the redox energy in a proton gradient.</text>
</comment>
<comment type="catalytic activity">
    <reaction evidence="1">
        <text>a quinone + NADH + 5 H(+)(in) = a quinol + NAD(+) + 4 H(+)(out)</text>
        <dbReference type="Rhea" id="RHEA:57888"/>
        <dbReference type="ChEBI" id="CHEBI:15378"/>
        <dbReference type="ChEBI" id="CHEBI:24646"/>
        <dbReference type="ChEBI" id="CHEBI:57540"/>
        <dbReference type="ChEBI" id="CHEBI:57945"/>
        <dbReference type="ChEBI" id="CHEBI:132124"/>
    </reaction>
</comment>
<comment type="cofactor">
    <cofactor evidence="1">
        <name>[4Fe-4S] cluster</name>
        <dbReference type="ChEBI" id="CHEBI:49883"/>
    </cofactor>
    <text evidence="1">Binds 1 [4Fe-4S] cluster.</text>
</comment>
<comment type="subunit">
    <text evidence="1">NDH-1 is composed of 13 different subunits. Subunits NuoB, CD, E, F, and G constitute the peripheral sector of the complex.</text>
</comment>
<comment type="subcellular location">
    <subcellularLocation>
        <location evidence="1">Cell inner membrane</location>
        <topology evidence="1">Peripheral membrane protein</topology>
        <orientation evidence="1">Cytoplasmic side</orientation>
    </subcellularLocation>
</comment>
<comment type="similarity">
    <text evidence="1">Belongs to the complex I 20 kDa subunit family.</text>
</comment>
<protein>
    <recommendedName>
        <fullName evidence="1">NADH-quinone oxidoreductase subunit B</fullName>
        <ecNumber evidence="1">7.1.1.-</ecNumber>
    </recommendedName>
    <alternativeName>
        <fullName evidence="1">NADH dehydrogenase I subunit B</fullName>
    </alternativeName>
    <alternativeName>
        <fullName evidence="1">NDH-1 subunit B</fullName>
    </alternativeName>
</protein>
<keyword id="KW-0004">4Fe-4S</keyword>
<keyword id="KW-0997">Cell inner membrane</keyword>
<keyword id="KW-1003">Cell membrane</keyword>
<keyword id="KW-0408">Iron</keyword>
<keyword id="KW-0411">Iron-sulfur</keyword>
<keyword id="KW-0472">Membrane</keyword>
<keyword id="KW-0479">Metal-binding</keyword>
<keyword id="KW-0520">NAD</keyword>
<keyword id="KW-0874">Quinone</keyword>
<keyword id="KW-1278">Translocase</keyword>
<keyword id="KW-0813">Transport</keyword>
<keyword id="KW-0830">Ubiquinone</keyword>
<gene>
    <name evidence="1" type="primary">nuoB</name>
    <name type="ordered locus">YpAngola_A1815</name>
</gene>
<evidence type="ECO:0000255" key="1">
    <source>
        <dbReference type="HAMAP-Rule" id="MF_01356"/>
    </source>
</evidence>
<reference key="1">
    <citation type="journal article" date="2010" name="J. Bacteriol.">
        <title>Genome sequence of the deep-rooted Yersinia pestis strain Angola reveals new insights into the evolution and pangenome of the plague bacterium.</title>
        <authorList>
            <person name="Eppinger M."/>
            <person name="Worsham P.L."/>
            <person name="Nikolich M.P."/>
            <person name="Riley D.R."/>
            <person name="Sebastian Y."/>
            <person name="Mou S."/>
            <person name="Achtman M."/>
            <person name="Lindler L.E."/>
            <person name="Ravel J."/>
        </authorList>
    </citation>
    <scope>NUCLEOTIDE SEQUENCE [LARGE SCALE GENOMIC DNA]</scope>
    <source>
        <strain>Angola</strain>
    </source>
</reference>
<proteinExistence type="inferred from homology"/>
<name>NUOB_YERPG</name>
<organism>
    <name type="scientific">Yersinia pestis bv. Antiqua (strain Angola)</name>
    <dbReference type="NCBI Taxonomy" id="349746"/>
    <lineage>
        <taxon>Bacteria</taxon>
        <taxon>Pseudomonadati</taxon>
        <taxon>Pseudomonadota</taxon>
        <taxon>Gammaproteobacteria</taxon>
        <taxon>Enterobacterales</taxon>
        <taxon>Yersiniaceae</taxon>
        <taxon>Yersinia</taxon>
    </lineage>
</organism>
<feature type="chain" id="PRO_0000376412" description="NADH-quinone oxidoreductase subunit B">
    <location>
        <begin position="1"/>
        <end position="225"/>
    </location>
</feature>
<feature type="binding site" evidence="1">
    <location>
        <position position="68"/>
    </location>
    <ligand>
        <name>[4Fe-4S] cluster</name>
        <dbReference type="ChEBI" id="CHEBI:49883"/>
    </ligand>
</feature>
<feature type="binding site" evidence="1">
    <location>
        <position position="69"/>
    </location>
    <ligand>
        <name>[4Fe-4S] cluster</name>
        <dbReference type="ChEBI" id="CHEBI:49883"/>
    </ligand>
</feature>
<feature type="binding site" evidence="1">
    <location>
        <position position="134"/>
    </location>
    <ligand>
        <name>[4Fe-4S] cluster</name>
        <dbReference type="ChEBI" id="CHEBI:49883"/>
    </ligand>
</feature>
<feature type="binding site" evidence="1">
    <location>
        <position position="163"/>
    </location>
    <ligand>
        <name>[4Fe-4S] cluster</name>
        <dbReference type="ChEBI" id="CHEBI:49883"/>
    </ligand>
</feature>
<sequence>MDYTLTRIDPNGENDRYPLQTQETVSGDPLEQHVHRSVYMGKLENAMHDMVNWGRKNSLWPYNFGLSCCYVEMVTSFTAVHDVARFGAEVLRASPRQADFMVVAGTCFTKMAPVIQRLYEQMLEPKWVISMGACANSGGMYDIYSVVQGVDKFLPVDVYIPGCPPRPEAYMQALLLLQESIGKERRPLSWVVGDQGVYRANMQPERERKHAERIAVTNLRTPDEI</sequence>